<evidence type="ECO:0000255" key="1"/>
<evidence type="ECO:0000255" key="2">
    <source>
        <dbReference type="HAMAP-Rule" id="MF_00442"/>
    </source>
</evidence>
<evidence type="ECO:0000269" key="3">
    <source>
    </source>
</evidence>
<evidence type="ECO:0000303" key="4">
    <source>
    </source>
</evidence>
<evidence type="ECO:0000305" key="5"/>
<protein>
    <recommendedName>
        <fullName evidence="2">ATP-dependent DNA helicase Hel308</fullName>
        <ecNumber evidence="2">5.6.2.4</ecNumber>
    </recommendedName>
    <alternativeName>
        <fullName evidence="4">ATP-dependent Holliday junction unwindase Hjm</fullName>
    </alternativeName>
    <alternativeName>
        <fullName evidence="2">DNA 3'-5' helicase Hel308</fullName>
    </alternativeName>
    <component>
        <recommendedName>
            <fullName>Endonuclease PI-PkoHel</fullName>
            <ecNumber>3.1.-.-</ecNumber>
        </recommendedName>
        <alternativeName>
            <fullName>Pko Hel intein</fullName>
        </alternativeName>
    </component>
</protein>
<dbReference type="EC" id="5.6.2.4" evidence="2"/>
<dbReference type="EC" id="3.1.-.-"/>
<dbReference type="EMBL" id="AP006878">
    <property type="protein sequence ID" value="BAD85521.1"/>
    <property type="molecule type" value="Genomic_DNA"/>
</dbReference>
<dbReference type="SMR" id="Q5JGV6"/>
<dbReference type="FunCoup" id="Q5JGV6">
    <property type="interactions" value="71"/>
</dbReference>
<dbReference type="STRING" id="69014.TK1332"/>
<dbReference type="EnsemblBacteria" id="BAD85521">
    <property type="protein sequence ID" value="BAD85521"/>
    <property type="gene ID" value="TK1332"/>
</dbReference>
<dbReference type="KEGG" id="tko:TK1332"/>
<dbReference type="PATRIC" id="fig|69014.16.peg.1304"/>
<dbReference type="eggNOG" id="arCOG00553">
    <property type="taxonomic scope" value="Archaea"/>
</dbReference>
<dbReference type="eggNOG" id="arCOG03145">
    <property type="taxonomic scope" value="Archaea"/>
</dbReference>
<dbReference type="HOGENOM" id="CLU_279743_0_0_2"/>
<dbReference type="InParanoid" id="Q5JGV6"/>
<dbReference type="PhylomeDB" id="Q5JGV6"/>
<dbReference type="Proteomes" id="UP000000536">
    <property type="component" value="Chromosome"/>
</dbReference>
<dbReference type="GO" id="GO:0043138">
    <property type="term" value="F:3'-5' DNA helicase activity"/>
    <property type="evidence" value="ECO:0007669"/>
    <property type="project" value="UniProtKB-UniRule"/>
</dbReference>
<dbReference type="GO" id="GO:0005524">
    <property type="term" value="F:ATP binding"/>
    <property type="evidence" value="ECO:0007669"/>
    <property type="project" value="UniProtKB-UniRule"/>
</dbReference>
<dbReference type="GO" id="GO:0016887">
    <property type="term" value="F:ATP hydrolysis activity"/>
    <property type="evidence" value="ECO:0007669"/>
    <property type="project" value="RHEA"/>
</dbReference>
<dbReference type="GO" id="GO:0003677">
    <property type="term" value="F:DNA binding"/>
    <property type="evidence" value="ECO:0007669"/>
    <property type="project" value="UniProtKB-UniRule"/>
</dbReference>
<dbReference type="GO" id="GO:0004519">
    <property type="term" value="F:endonuclease activity"/>
    <property type="evidence" value="ECO:0007669"/>
    <property type="project" value="UniProtKB-KW"/>
</dbReference>
<dbReference type="GO" id="GO:0006281">
    <property type="term" value="P:DNA repair"/>
    <property type="evidence" value="ECO:0007669"/>
    <property type="project" value="UniProtKB-UniRule"/>
</dbReference>
<dbReference type="GO" id="GO:0016539">
    <property type="term" value="P:intein-mediated protein splicing"/>
    <property type="evidence" value="ECO:0007669"/>
    <property type="project" value="InterPro"/>
</dbReference>
<dbReference type="GO" id="GO:0006314">
    <property type="term" value="P:intron homing"/>
    <property type="evidence" value="ECO:0007669"/>
    <property type="project" value="UniProtKB-KW"/>
</dbReference>
<dbReference type="CDD" id="cd18028">
    <property type="entry name" value="DEXHc_archSki2"/>
    <property type="match status" value="1"/>
</dbReference>
<dbReference type="CDD" id="cd00081">
    <property type="entry name" value="Hint"/>
    <property type="match status" value="2"/>
</dbReference>
<dbReference type="Gene3D" id="1.10.3380.30">
    <property type="match status" value="1"/>
</dbReference>
<dbReference type="Gene3D" id="1.10.150.20">
    <property type="entry name" value="5' to 3' exonuclease, C-terminal subdomain"/>
    <property type="match status" value="1"/>
</dbReference>
<dbReference type="Gene3D" id="2.170.16.10">
    <property type="entry name" value="Hedgehog/Intein (Hint) domain"/>
    <property type="match status" value="1"/>
</dbReference>
<dbReference type="Gene3D" id="3.10.28.10">
    <property type="entry name" value="Homing endonucleases"/>
    <property type="match status" value="1"/>
</dbReference>
<dbReference type="Gene3D" id="3.40.50.300">
    <property type="entry name" value="P-loop containing nucleotide triphosphate hydrolases"/>
    <property type="match status" value="3"/>
</dbReference>
<dbReference type="HAMAP" id="MF_00442">
    <property type="entry name" value="Helicase_Hel308"/>
    <property type="match status" value="1"/>
</dbReference>
<dbReference type="InterPro" id="IPR011545">
    <property type="entry name" value="DEAD/DEAH_box_helicase_dom"/>
</dbReference>
<dbReference type="InterPro" id="IPR048772">
    <property type="entry name" value="Hel308-like_dom4"/>
</dbReference>
<dbReference type="InterPro" id="IPR050474">
    <property type="entry name" value="Hel308_SKI2-like"/>
</dbReference>
<dbReference type="InterPro" id="IPR014001">
    <property type="entry name" value="Helicase_ATP-bd"/>
</dbReference>
<dbReference type="InterPro" id="IPR022965">
    <property type="entry name" value="Helicase_Hel308"/>
</dbReference>
<dbReference type="InterPro" id="IPR003586">
    <property type="entry name" value="Hint_dom_C"/>
</dbReference>
<dbReference type="InterPro" id="IPR036844">
    <property type="entry name" value="Hint_dom_sf"/>
</dbReference>
<dbReference type="InterPro" id="IPR003583">
    <property type="entry name" value="Hlx-hairpin-Hlx_DNA-bd_motif"/>
</dbReference>
<dbReference type="InterPro" id="IPR027434">
    <property type="entry name" value="Homing_endonucl"/>
</dbReference>
<dbReference type="InterPro" id="IPR006142">
    <property type="entry name" value="INTEIN"/>
</dbReference>
<dbReference type="InterPro" id="IPR030934">
    <property type="entry name" value="Intein_C"/>
</dbReference>
<dbReference type="InterPro" id="IPR004042">
    <property type="entry name" value="Intein_endonuc_central"/>
</dbReference>
<dbReference type="InterPro" id="IPR006141">
    <property type="entry name" value="Intein_N"/>
</dbReference>
<dbReference type="InterPro" id="IPR004860">
    <property type="entry name" value="LAGLIDADG_dom"/>
</dbReference>
<dbReference type="InterPro" id="IPR027417">
    <property type="entry name" value="P-loop_NTPase"/>
</dbReference>
<dbReference type="InterPro" id="IPR036390">
    <property type="entry name" value="WH_DNA-bd_sf"/>
</dbReference>
<dbReference type="NCBIfam" id="TIGR01443">
    <property type="entry name" value="intein_Cterm"/>
    <property type="match status" value="1"/>
</dbReference>
<dbReference type="PANTHER" id="PTHR47961:SF10">
    <property type="entry name" value="ATP-DEPENDENT DNA HELICASE HEL308"/>
    <property type="match status" value="1"/>
</dbReference>
<dbReference type="PANTHER" id="PTHR47961">
    <property type="entry name" value="DNA POLYMERASE THETA, PUTATIVE (AFU_ORTHOLOGUE AFUA_1G05260)-RELATED"/>
    <property type="match status" value="1"/>
</dbReference>
<dbReference type="Pfam" id="PF00270">
    <property type="entry name" value="DEAD"/>
    <property type="match status" value="1"/>
</dbReference>
<dbReference type="Pfam" id="PF21280">
    <property type="entry name" value="Helicase_dom4_arc"/>
    <property type="match status" value="1"/>
</dbReference>
<dbReference type="Pfam" id="PF14520">
    <property type="entry name" value="HHH_5"/>
    <property type="match status" value="1"/>
</dbReference>
<dbReference type="Pfam" id="PF14528">
    <property type="entry name" value="LAGLIDADG_3"/>
    <property type="match status" value="2"/>
</dbReference>
<dbReference type="PRINTS" id="PR00379">
    <property type="entry name" value="INTEIN"/>
</dbReference>
<dbReference type="SMART" id="SM00487">
    <property type="entry name" value="DEXDc"/>
    <property type="match status" value="1"/>
</dbReference>
<dbReference type="SMART" id="SM00278">
    <property type="entry name" value="HhH1"/>
    <property type="match status" value="2"/>
</dbReference>
<dbReference type="SMART" id="SM00305">
    <property type="entry name" value="HintC"/>
    <property type="match status" value="1"/>
</dbReference>
<dbReference type="SUPFAM" id="SSF51294">
    <property type="entry name" value="Hedgehog/intein (Hint) domain"/>
    <property type="match status" value="1"/>
</dbReference>
<dbReference type="SUPFAM" id="SSF55608">
    <property type="entry name" value="Homing endonucleases"/>
    <property type="match status" value="1"/>
</dbReference>
<dbReference type="SUPFAM" id="SSF52540">
    <property type="entry name" value="P-loop containing nucleoside triphosphate hydrolases"/>
    <property type="match status" value="3"/>
</dbReference>
<dbReference type="SUPFAM" id="SSF158702">
    <property type="entry name" value="Sec63 N-terminal domain-like"/>
    <property type="match status" value="1"/>
</dbReference>
<dbReference type="SUPFAM" id="SSF46785">
    <property type="entry name" value="Winged helix' DNA-binding domain"/>
    <property type="match status" value="1"/>
</dbReference>
<dbReference type="PROSITE" id="PS51192">
    <property type="entry name" value="HELICASE_ATP_BIND_1"/>
    <property type="match status" value="1"/>
</dbReference>
<dbReference type="PROSITE" id="PS51194">
    <property type="entry name" value="HELICASE_CTER"/>
    <property type="match status" value="1"/>
</dbReference>
<dbReference type="PROSITE" id="PS50818">
    <property type="entry name" value="INTEIN_C_TER"/>
    <property type="match status" value="1"/>
</dbReference>
<dbReference type="PROSITE" id="PS50819">
    <property type="entry name" value="INTEIN_ENDONUCLEASE"/>
    <property type="match status" value="1"/>
</dbReference>
<dbReference type="PROSITE" id="PS50817">
    <property type="entry name" value="INTEIN_N_TER"/>
    <property type="match status" value="1"/>
</dbReference>
<dbReference type="PROSITE" id="PS51195">
    <property type="entry name" value="Q_MOTIF"/>
    <property type="match status" value="1"/>
</dbReference>
<keyword id="KW-0067">ATP-binding</keyword>
<keyword id="KW-0068">Autocatalytic cleavage</keyword>
<keyword id="KW-0227">DNA damage</keyword>
<keyword id="KW-0234">DNA repair</keyword>
<keyword id="KW-0238">DNA-binding</keyword>
<keyword id="KW-0255">Endonuclease</keyword>
<keyword id="KW-0347">Helicase</keyword>
<keyword id="KW-0378">Hydrolase</keyword>
<keyword id="KW-0404">Intron homing</keyword>
<keyword id="KW-0413">Isomerase</keyword>
<keyword id="KW-0540">Nuclease</keyword>
<keyword id="KW-0547">Nucleotide-binding</keyword>
<keyword id="KW-0651">Protein splicing</keyword>
<keyword id="KW-1185">Reference proteome</keyword>
<name>HELS_THEKO</name>
<proteinExistence type="inferred from homology"/>
<gene>
    <name evidence="2" type="primary">hel308</name>
    <name evidence="4" type="synonym">hjm</name>
    <name type="ordered locus">TK1332</name>
</gene>
<feature type="chain" id="PRO_0000013302" description="ATP-dependent DNA helicase Hel308, 1st part" evidence="1">
    <location>
        <begin position="1"/>
        <end position="331"/>
    </location>
</feature>
<feature type="chain" id="PRO_0000013303" description="Endonuclease PI-PkoHel" evidence="1">
    <location>
        <begin position="332"/>
        <end position="734"/>
    </location>
</feature>
<feature type="chain" id="PRO_0000013304" description="ATP-dependent DNA helicase Hel308, 2nd part" evidence="1">
    <location>
        <begin position="735"/>
        <end position="1125"/>
    </location>
</feature>
<feature type="domain" description="Helicase ATP-binding" evidence="2">
    <location>
        <begin position="33"/>
        <end position="197"/>
    </location>
</feature>
<feature type="domain" description="Helicase C-terminal" evidence="2">
    <location>
        <begin position="226"/>
        <end position="440"/>
    </location>
</feature>
<feature type="domain" description="DOD-type homing endonuclease">
    <location>
        <begin position="500"/>
        <end position="640"/>
    </location>
</feature>
<feature type="short sequence motif" description="Q motif">
    <location>
        <begin position="1"/>
        <end position="29"/>
    </location>
</feature>
<feature type="short sequence motif" description="DEAH box" evidence="2">
    <location>
        <begin position="145"/>
        <end position="148"/>
    </location>
</feature>
<feature type="binding site" evidence="2">
    <location>
        <position position="28"/>
    </location>
    <ligand>
        <name>ATP</name>
        <dbReference type="ChEBI" id="CHEBI:30616"/>
    </ligand>
</feature>
<feature type="binding site" evidence="2">
    <location>
        <begin position="46"/>
        <end position="53"/>
    </location>
    <ligand>
        <name>ATP</name>
        <dbReference type="ChEBI" id="CHEBI:30616"/>
    </ligand>
</feature>
<organism>
    <name type="scientific">Thermococcus kodakarensis (strain ATCC BAA-918 / JCM 12380 / KOD1)</name>
    <name type="common">Pyrococcus kodakaraensis (strain KOD1)</name>
    <dbReference type="NCBI Taxonomy" id="69014"/>
    <lineage>
        <taxon>Archaea</taxon>
        <taxon>Methanobacteriati</taxon>
        <taxon>Methanobacteriota</taxon>
        <taxon>Thermococci</taxon>
        <taxon>Thermococcales</taxon>
        <taxon>Thermococcaceae</taxon>
        <taxon>Thermococcus</taxon>
    </lineage>
</organism>
<reference key="1">
    <citation type="journal article" date="2005" name="Genome Res.">
        <title>Complete genome sequence of the hyperthermophilic archaeon Thermococcus kodakaraensis KOD1 and comparison with Pyrococcus genomes.</title>
        <authorList>
            <person name="Fukui T."/>
            <person name="Atomi H."/>
            <person name="Kanai T."/>
            <person name="Matsumi R."/>
            <person name="Fujiwara S."/>
            <person name="Imanaka T."/>
        </authorList>
    </citation>
    <scope>NUCLEOTIDE SEQUENCE [LARGE SCALE GENOMIC DNA]</scope>
    <source>
        <strain>ATCC BAA-918 / JCM 12380 / KOD1</strain>
    </source>
</reference>
<reference key="2">
    <citation type="journal article" date="2010" name="Genes Genet. Syst.">
        <title>Genetic analysis of DNA repair in the hyperthermophilic archaeon, Thermococcus kodakaraensis.</title>
        <authorList>
            <person name="Fujikane R."/>
            <person name="Ishino S."/>
            <person name="Ishino Y."/>
            <person name="Forterre P."/>
        </authorList>
    </citation>
    <scope>DISRUPTION PHENOTYPE</scope>
    <source>
        <strain>ATCC BAA-918 / JCM 12380 / KOD1</strain>
    </source>
</reference>
<sequence length="1125" mass="129202">MKVDELPIDERIKRVIKERGIEELYPPQAEALKSGVLEGKNLVLAIPTASGKTLVSEIVMVNKLLSEGGKAVYLVPLKALAEEKYREFKEWEVLGLRVAATTGDYDSTDEWLGRYDIIVATAEKFDSLLRHGASWIKDVKLVVADEVHLIGSYDRGATLEMILTHMLGKAQILALSATVGNAEELAEWLDASLVVSDWRPVELRKGVFHLGQLFWEDGKIDHYPENWESLVLDAVKKGKQALVFVNTRRSAEKEAISLSSKVSKLLTKPETRRLEELISSIEDNPTTEKLKRALKGGVAFHHAGLSRAERTLIEDAFRNGLIKVITATPTLCMHPDTYVVTKSGAKKVSELTEGDEVLTHTGTFKKVIQPLRREHKGRLLVIKAYGTVPVKITPEHMVWVVKQIRHKSHYSDGRQVIWWEFEGPEWMTAQELKERLESETDPKVSYMLLQPIPEPSVDADKIPLRKEVYVVNQHGKTDKLHPSVKRTPEYLPLNFETARLIGLWIAEGSTSKNGVIKFDISSNEEDLTEFITGTIRKYFPHAKIVVKDHERNRRTVRFCNKRFAEWLRENIGHGADNKSIPPLLLLNKNREVRLGLLRGLIEGDGYVRRESQRRANYISYSTVSPSLAYQLQLLVASLGYTSSIHRSIRTEGIGKTRKPIYDVKVSGKSYYSLLEELGFEVPQRGNRTYNVNRTWKNYLLLKVRSIEEEEYEGDVYNLEVEGDESYSVGFIVHNSAGINLPAFRVIIRDTKRYANFGWTDIPVLEIQQMMGRAGRPKYDKVGEAIIVARTEDPKKLIDRYIHGKPEKLFSMLANEQAFRSQVLALITNFGVEDFRELVDFLSRTFYAHQRGDTSSLEYKAKDIVYFLIENEFIDMDVENRFIALPFGRRTSQLYIDPLTAKKFKDAFPAIERNPNPFGIFQLLASTPDMATLTARRREMEDYLDLAYEMEEHLYSSIPYYEDSRFQGFLGQVKTAKVLLDWINEVPEARIYETYNIDPGDLYRILELADWLMYSLIELYKLFEPKEDVLQYLRDLHLRLRHGVREELLELVKLPNIGRRRARALYNAGFRSVEDILRAKPKDLLQVEGIGLKIIEGIYRHLGVEYTISEKEKPKKRKGNLYDFLK</sequence>
<comment type="function">
    <text evidence="2">DNA-dependent ATPase and 3'-5' DNA helicase that may be involved in repair of stalled replication forks.</text>
</comment>
<comment type="catalytic activity">
    <reaction evidence="2">
        <text>Couples ATP hydrolysis with the unwinding of duplex DNA by translocating in the 3'-5' direction.</text>
        <dbReference type="EC" id="5.6.2.4"/>
    </reaction>
</comment>
<comment type="catalytic activity">
    <reaction evidence="2">
        <text>ATP + H2O = ADP + phosphate + H(+)</text>
        <dbReference type="Rhea" id="RHEA:13065"/>
        <dbReference type="ChEBI" id="CHEBI:15377"/>
        <dbReference type="ChEBI" id="CHEBI:15378"/>
        <dbReference type="ChEBI" id="CHEBI:30616"/>
        <dbReference type="ChEBI" id="CHEBI:43474"/>
        <dbReference type="ChEBI" id="CHEBI:456216"/>
        <dbReference type="EC" id="5.6.2.4"/>
    </reaction>
</comment>
<comment type="subunit">
    <text evidence="2">Monomer.</text>
</comment>
<comment type="PTM">
    <text evidence="5">This protein undergoes a protein self splicing that involves a post-translational excision of the intervening region (intein) followed by peptide ligation.</text>
</comment>
<comment type="disruption phenotype">
    <text evidence="3">Not essential, it can be disrupted. Slightly more sensitive to UV and mitomycin C than wild-type cells.</text>
</comment>
<comment type="similarity">
    <text evidence="2">Belongs to the helicase family. Hel308 subfamily.</text>
</comment>
<accession>Q5JGV6</accession>